<dbReference type="EC" id="4.3.2.10" evidence="1"/>
<dbReference type="EMBL" id="AE017180">
    <property type="protein sequence ID" value="AAR36486.1"/>
    <property type="molecule type" value="Genomic_DNA"/>
</dbReference>
<dbReference type="RefSeq" id="NP_954136.1">
    <property type="nucleotide sequence ID" value="NC_002939.5"/>
</dbReference>
<dbReference type="RefSeq" id="WP_010943716.1">
    <property type="nucleotide sequence ID" value="NC_002939.5"/>
</dbReference>
<dbReference type="SMR" id="P60715"/>
<dbReference type="FunCoup" id="P60715">
    <property type="interactions" value="560"/>
</dbReference>
<dbReference type="STRING" id="243231.GSU3095"/>
<dbReference type="EnsemblBacteria" id="AAR36486">
    <property type="protein sequence ID" value="AAR36486"/>
    <property type="gene ID" value="GSU3095"/>
</dbReference>
<dbReference type="KEGG" id="gsu:GSU3095"/>
<dbReference type="PATRIC" id="fig|243231.5.peg.3119"/>
<dbReference type="eggNOG" id="COG0107">
    <property type="taxonomic scope" value="Bacteria"/>
</dbReference>
<dbReference type="HOGENOM" id="CLU_048577_4_0_7"/>
<dbReference type="InParanoid" id="P60715"/>
<dbReference type="OrthoDB" id="9807749at2"/>
<dbReference type="UniPathway" id="UPA00031">
    <property type="reaction ID" value="UER00010"/>
</dbReference>
<dbReference type="Proteomes" id="UP000000577">
    <property type="component" value="Chromosome"/>
</dbReference>
<dbReference type="GO" id="GO:0005737">
    <property type="term" value="C:cytoplasm"/>
    <property type="evidence" value="ECO:0007669"/>
    <property type="project" value="UniProtKB-SubCell"/>
</dbReference>
<dbReference type="GO" id="GO:0000107">
    <property type="term" value="F:imidazoleglycerol-phosphate synthase activity"/>
    <property type="evidence" value="ECO:0000318"/>
    <property type="project" value="GO_Central"/>
</dbReference>
<dbReference type="GO" id="GO:0016829">
    <property type="term" value="F:lyase activity"/>
    <property type="evidence" value="ECO:0007669"/>
    <property type="project" value="UniProtKB-KW"/>
</dbReference>
<dbReference type="GO" id="GO:0000105">
    <property type="term" value="P:L-histidine biosynthetic process"/>
    <property type="evidence" value="ECO:0007669"/>
    <property type="project" value="UniProtKB-UniRule"/>
</dbReference>
<dbReference type="CDD" id="cd04731">
    <property type="entry name" value="HisF"/>
    <property type="match status" value="1"/>
</dbReference>
<dbReference type="FunFam" id="3.20.20.70:FF:000006">
    <property type="entry name" value="Imidazole glycerol phosphate synthase subunit HisF"/>
    <property type="match status" value="1"/>
</dbReference>
<dbReference type="Gene3D" id="3.20.20.70">
    <property type="entry name" value="Aldolase class I"/>
    <property type="match status" value="1"/>
</dbReference>
<dbReference type="HAMAP" id="MF_01013">
    <property type="entry name" value="HisF"/>
    <property type="match status" value="1"/>
</dbReference>
<dbReference type="InterPro" id="IPR013785">
    <property type="entry name" value="Aldolase_TIM"/>
</dbReference>
<dbReference type="InterPro" id="IPR006062">
    <property type="entry name" value="His_biosynth"/>
</dbReference>
<dbReference type="InterPro" id="IPR004651">
    <property type="entry name" value="HisF"/>
</dbReference>
<dbReference type="InterPro" id="IPR050064">
    <property type="entry name" value="IGPS_HisA/HisF"/>
</dbReference>
<dbReference type="InterPro" id="IPR011060">
    <property type="entry name" value="RibuloseP-bd_barrel"/>
</dbReference>
<dbReference type="NCBIfam" id="TIGR00735">
    <property type="entry name" value="hisF"/>
    <property type="match status" value="1"/>
</dbReference>
<dbReference type="PANTHER" id="PTHR21235:SF2">
    <property type="entry name" value="IMIDAZOLE GLYCEROL PHOSPHATE SYNTHASE HISHF"/>
    <property type="match status" value="1"/>
</dbReference>
<dbReference type="PANTHER" id="PTHR21235">
    <property type="entry name" value="IMIDAZOLE GLYCEROL PHOSPHATE SYNTHASE SUBUNIT HISF/H IGP SYNTHASE SUBUNIT HISF/H"/>
    <property type="match status" value="1"/>
</dbReference>
<dbReference type="Pfam" id="PF00977">
    <property type="entry name" value="His_biosynth"/>
    <property type="match status" value="1"/>
</dbReference>
<dbReference type="SUPFAM" id="SSF51366">
    <property type="entry name" value="Ribulose-phoshate binding barrel"/>
    <property type="match status" value="1"/>
</dbReference>
<reference key="1">
    <citation type="journal article" date="2003" name="Science">
        <title>Genome of Geobacter sulfurreducens: metal reduction in subsurface environments.</title>
        <authorList>
            <person name="Methe B.A."/>
            <person name="Nelson K.E."/>
            <person name="Eisen J.A."/>
            <person name="Paulsen I.T."/>
            <person name="Nelson W.C."/>
            <person name="Heidelberg J.F."/>
            <person name="Wu D."/>
            <person name="Wu M."/>
            <person name="Ward N.L."/>
            <person name="Beanan M.J."/>
            <person name="Dodson R.J."/>
            <person name="Madupu R."/>
            <person name="Brinkac L.M."/>
            <person name="Daugherty S.C."/>
            <person name="DeBoy R.T."/>
            <person name="Durkin A.S."/>
            <person name="Gwinn M.L."/>
            <person name="Kolonay J.F."/>
            <person name="Sullivan S.A."/>
            <person name="Haft D.H."/>
            <person name="Selengut J."/>
            <person name="Davidsen T.M."/>
            <person name="Zafar N."/>
            <person name="White O."/>
            <person name="Tran B."/>
            <person name="Romero C."/>
            <person name="Forberger H.A."/>
            <person name="Weidman J.F."/>
            <person name="Khouri H.M."/>
            <person name="Feldblyum T.V."/>
            <person name="Utterback T.R."/>
            <person name="Van Aken S.E."/>
            <person name="Lovley D.R."/>
            <person name="Fraser C.M."/>
        </authorList>
    </citation>
    <scope>NUCLEOTIDE SEQUENCE [LARGE SCALE GENOMIC DNA]</scope>
    <source>
        <strain>ATCC 51573 / DSM 12127 / PCA</strain>
    </source>
</reference>
<protein>
    <recommendedName>
        <fullName evidence="1">Imidazole glycerol phosphate synthase subunit HisF</fullName>
        <ecNumber evidence="1">4.3.2.10</ecNumber>
    </recommendedName>
    <alternativeName>
        <fullName evidence="1">IGP synthase cyclase subunit</fullName>
    </alternativeName>
    <alternativeName>
        <fullName evidence="1">IGP synthase subunit HisF</fullName>
    </alternativeName>
    <alternativeName>
        <fullName evidence="1">ImGP synthase subunit HisF</fullName>
        <shortName evidence="1">IGPS subunit HisF</shortName>
    </alternativeName>
</protein>
<gene>
    <name evidence="1" type="primary">hisF</name>
    <name type="ordered locus">GSU3095</name>
</gene>
<keyword id="KW-0028">Amino-acid biosynthesis</keyword>
<keyword id="KW-0963">Cytoplasm</keyword>
<keyword id="KW-0368">Histidine biosynthesis</keyword>
<keyword id="KW-0456">Lyase</keyword>
<keyword id="KW-1185">Reference proteome</keyword>
<organism>
    <name type="scientific">Geobacter sulfurreducens (strain ATCC 51573 / DSM 12127 / PCA)</name>
    <dbReference type="NCBI Taxonomy" id="243231"/>
    <lineage>
        <taxon>Bacteria</taxon>
        <taxon>Pseudomonadati</taxon>
        <taxon>Thermodesulfobacteriota</taxon>
        <taxon>Desulfuromonadia</taxon>
        <taxon>Geobacterales</taxon>
        <taxon>Geobacteraceae</taxon>
        <taxon>Geobacter</taxon>
    </lineage>
</organism>
<feature type="chain" id="PRO_0000142160" description="Imidazole glycerol phosphate synthase subunit HisF">
    <location>
        <begin position="1"/>
        <end position="253"/>
    </location>
</feature>
<feature type="active site" evidence="1">
    <location>
        <position position="11"/>
    </location>
</feature>
<feature type="active site" evidence="1">
    <location>
        <position position="130"/>
    </location>
</feature>
<comment type="function">
    <text evidence="1">IGPS catalyzes the conversion of PRFAR and glutamine to IGP, AICAR and glutamate. The HisF subunit catalyzes the cyclization activity that produces IGP and AICAR from PRFAR using the ammonia provided by the HisH subunit.</text>
</comment>
<comment type="catalytic activity">
    <reaction evidence="1">
        <text>5-[(5-phospho-1-deoxy-D-ribulos-1-ylimino)methylamino]-1-(5-phospho-beta-D-ribosyl)imidazole-4-carboxamide + L-glutamine = D-erythro-1-(imidazol-4-yl)glycerol 3-phosphate + 5-amino-1-(5-phospho-beta-D-ribosyl)imidazole-4-carboxamide + L-glutamate + H(+)</text>
        <dbReference type="Rhea" id="RHEA:24793"/>
        <dbReference type="ChEBI" id="CHEBI:15378"/>
        <dbReference type="ChEBI" id="CHEBI:29985"/>
        <dbReference type="ChEBI" id="CHEBI:58278"/>
        <dbReference type="ChEBI" id="CHEBI:58359"/>
        <dbReference type="ChEBI" id="CHEBI:58475"/>
        <dbReference type="ChEBI" id="CHEBI:58525"/>
        <dbReference type="EC" id="4.3.2.10"/>
    </reaction>
</comment>
<comment type="pathway">
    <text evidence="1">Amino-acid biosynthesis; L-histidine biosynthesis; L-histidine from 5-phospho-alpha-D-ribose 1-diphosphate: step 5/9.</text>
</comment>
<comment type="subunit">
    <text evidence="1">Heterodimer of HisH and HisF.</text>
</comment>
<comment type="subcellular location">
    <subcellularLocation>
        <location evidence="1">Cytoplasm</location>
    </subcellularLocation>
</comment>
<comment type="similarity">
    <text evidence="1">Belongs to the HisA/HisF family.</text>
</comment>
<evidence type="ECO:0000255" key="1">
    <source>
        <dbReference type="HAMAP-Rule" id="MF_01013"/>
    </source>
</evidence>
<proteinExistence type="inferred from homology"/>
<sequence>MLTKRIIPCLDVKGGRVVKGVQFLELRDAGDPVEIAELYDRQGADELTFLDITASSDERSIIIDVVRRTAERVFMPLTVGGGVRTVDDIRNLLNAGADKVSINTAAVHRPEFVREAAERFGSQCTVVAIDARQVPGENRWEVYTHGGRNPTGIDAVEWARRMEEYGAGEILLTSMDRDGTKDGYDIPLTRAIVDAVSIPVIASGGVGNLEHLYDGFVKAGASACLAASIFHYKEYTIGEAKEYLRQRGVPVRL</sequence>
<name>HIS6_GEOSL</name>
<accession>P60715</accession>